<dbReference type="EC" id="2.7.4.3" evidence="1"/>
<dbReference type="EMBL" id="AE009439">
    <property type="protein sequence ID" value="AAM01242.1"/>
    <property type="molecule type" value="Genomic_DNA"/>
</dbReference>
<dbReference type="RefSeq" id="WP_011018397.1">
    <property type="nucleotide sequence ID" value="NC_003551.1"/>
</dbReference>
<dbReference type="SMR" id="Q8TZB0"/>
<dbReference type="FunCoup" id="Q8TZB0">
    <property type="interactions" value="101"/>
</dbReference>
<dbReference type="STRING" id="190192.MK0025"/>
<dbReference type="PaxDb" id="190192-MK0025"/>
<dbReference type="EnsemblBacteria" id="AAM01242">
    <property type="protein sequence ID" value="AAM01242"/>
    <property type="gene ID" value="MK0025"/>
</dbReference>
<dbReference type="GeneID" id="1477328"/>
<dbReference type="KEGG" id="mka:MK0025"/>
<dbReference type="PATRIC" id="fig|190192.8.peg.25"/>
<dbReference type="HOGENOM" id="CLU_119371_0_0_2"/>
<dbReference type="InParanoid" id="Q8TZB0"/>
<dbReference type="OrthoDB" id="26198at2157"/>
<dbReference type="Proteomes" id="UP000001826">
    <property type="component" value="Chromosome"/>
</dbReference>
<dbReference type="GO" id="GO:0005737">
    <property type="term" value="C:cytoplasm"/>
    <property type="evidence" value="ECO:0007669"/>
    <property type="project" value="UniProtKB-SubCell"/>
</dbReference>
<dbReference type="GO" id="GO:0004017">
    <property type="term" value="F:adenylate kinase activity"/>
    <property type="evidence" value="ECO:0007669"/>
    <property type="project" value="UniProtKB-UniRule"/>
</dbReference>
<dbReference type="GO" id="GO:0005524">
    <property type="term" value="F:ATP binding"/>
    <property type="evidence" value="ECO:0007669"/>
    <property type="project" value="UniProtKB-UniRule"/>
</dbReference>
<dbReference type="Gene3D" id="3.40.50.300">
    <property type="entry name" value="P-loop containing nucleotide triphosphate hydrolases"/>
    <property type="match status" value="1"/>
</dbReference>
<dbReference type="HAMAP" id="MF_00234">
    <property type="entry name" value="Adenylate_kinase_AdkA"/>
    <property type="match status" value="1"/>
</dbReference>
<dbReference type="InterPro" id="IPR023477">
    <property type="entry name" value="Adenylate_kinase_AdkA"/>
</dbReference>
<dbReference type="InterPro" id="IPR027417">
    <property type="entry name" value="P-loop_NTPase"/>
</dbReference>
<dbReference type="NCBIfam" id="NF003122">
    <property type="entry name" value="PRK04040.1"/>
    <property type="match status" value="1"/>
</dbReference>
<dbReference type="Pfam" id="PF13207">
    <property type="entry name" value="AAA_17"/>
    <property type="match status" value="1"/>
</dbReference>
<dbReference type="SUPFAM" id="SSF52540">
    <property type="entry name" value="P-loop containing nucleoside triphosphate hydrolases"/>
    <property type="match status" value="1"/>
</dbReference>
<evidence type="ECO:0000255" key="1">
    <source>
        <dbReference type="HAMAP-Rule" id="MF_00234"/>
    </source>
</evidence>
<reference key="1">
    <citation type="journal article" date="2002" name="Proc. Natl. Acad. Sci. U.S.A.">
        <title>The complete genome of hyperthermophile Methanopyrus kandleri AV19 and monophyly of archaeal methanogens.</title>
        <authorList>
            <person name="Slesarev A.I."/>
            <person name="Mezhevaya K.V."/>
            <person name="Makarova K.S."/>
            <person name="Polushin N.N."/>
            <person name="Shcherbinina O.V."/>
            <person name="Shakhova V.V."/>
            <person name="Belova G.I."/>
            <person name="Aravind L."/>
            <person name="Natale D.A."/>
            <person name="Rogozin I.B."/>
            <person name="Tatusov R.L."/>
            <person name="Wolf Y.I."/>
            <person name="Stetter K.O."/>
            <person name="Malykh A.G."/>
            <person name="Koonin E.V."/>
            <person name="Kozyavkin S.A."/>
        </authorList>
    </citation>
    <scope>NUCLEOTIDE SEQUENCE [LARGE SCALE GENOMIC DNA]</scope>
    <source>
        <strain>AV19 / DSM 6324 / JCM 9639 / NBRC 100938</strain>
    </source>
</reference>
<accession>Q8TZB0</accession>
<keyword id="KW-0067">ATP-binding</keyword>
<keyword id="KW-0963">Cytoplasm</keyword>
<keyword id="KW-0418">Kinase</keyword>
<keyword id="KW-0547">Nucleotide-binding</keyword>
<keyword id="KW-1185">Reference proteome</keyword>
<keyword id="KW-0808">Transferase</keyword>
<comment type="catalytic activity">
    <reaction evidence="1">
        <text>AMP + ATP = 2 ADP</text>
        <dbReference type="Rhea" id="RHEA:12973"/>
        <dbReference type="ChEBI" id="CHEBI:30616"/>
        <dbReference type="ChEBI" id="CHEBI:456215"/>
        <dbReference type="ChEBI" id="CHEBI:456216"/>
        <dbReference type="EC" id="2.7.4.3"/>
    </reaction>
</comment>
<comment type="subcellular location">
    <subcellularLocation>
        <location evidence="1">Cytoplasm</location>
    </subcellularLocation>
</comment>
<comment type="similarity">
    <text evidence="1">Belongs to the archaeal adenylate kinase family.</text>
</comment>
<gene>
    <name evidence="1" type="primary">adkA</name>
    <name type="ordered locus">MK0025</name>
</gene>
<sequence>MGYVIVATGVPGVGATTVTTEAVKELEGYEHVNYGDVMLEIAKEEGLVEHRDEIRKLPAEKQREIQRLAARRIAKMAEEKEGIIVDTHCTIKTPAGYLPGLPIWVLEELQPDVIVLIEADPDEIMMRRVKDSEERQRDYDRAHEIEEHQKMNRMAAMAYAALTGATVKIIENHDDRLEEAVREFVETVRSL</sequence>
<protein>
    <recommendedName>
        <fullName evidence="1">Adenylate kinase</fullName>
        <shortName evidence="1">AK</shortName>
        <ecNumber evidence="1">2.7.4.3</ecNumber>
    </recommendedName>
    <alternativeName>
        <fullName evidence="1">ATP-AMP transphosphorylase</fullName>
    </alternativeName>
</protein>
<organism>
    <name type="scientific">Methanopyrus kandleri (strain AV19 / DSM 6324 / JCM 9639 / NBRC 100938)</name>
    <dbReference type="NCBI Taxonomy" id="190192"/>
    <lineage>
        <taxon>Archaea</taxon>
        <taxon>Methanobacteriati</taxon>
        <taxon>Methanobacteriota</taxon>
        <taxon>Methanomada group</taxon>
        <taxon>Methanopyri</taxon>
        <taxon>Methanopyrales</taxon>
        <taxon>Methanopyraceae</taxon>
        <taxon>Methanopyrus</taxon>
    </lineage>
</organism>
<feature type="chain" id="PRO_0000131815" description="Adenylate kinase">
    <location>
        <begin position="1"/>
        <end position="191"/>
    </location>
</feature>
<feature type="binding site" evidence="1">
    <location>
        <begin position="9"/>
        <end position="17"/>
    </location>
    <ligand>
        <name>ATP</name>
        <dbReference type="ChEBI" id="CHEBI:30616"/>
    </ligand>
</feature>
<name>KADA_METKA</name>
<proteinExistence type="inferred from homology"/>